<dbReference type="EC" id="3.1.3.48"/>
<dbReference type="EMBL" id="M80464">
    <property type="protein sequence ID" value="AAA28486.1"/>
    <property type="molecule type" value="mRNA"/>
</dbReference>
<dbReference type="EMBL" id="M80539">
    <property type="protein sequence ID" value="AAA28485.1"/>
    <property type="molecule type" value="mRNA"/>
</dbReference>
<dbReference type="EMBL" id="M81795">
    <property type="protein sequence ID" value="AAA28483.1"/>
    <property type="molecule type" value="mRNA"/>
</dbReference>
<dbReference type="EMBL" id="AE014297">
    <property type="protein sequence ID" value="AAF56891.3"/>
    <property type="molecule type" value="Genomic_DNA"/>
</dbReference>
<dbReference type="EMBL" id="AE014297">
    <property type="protein sequence ID" value="AAN14172.1"/>
    <property type="molecule type" value="Genomic_DNA"/>
</dbReference>
<dbReference type="EMBL" id="AE014297">
    <property type="protein sequence ID" value="AAS65222.1"/>
    <property type="molecule type" value="Genomic_DNA"/>
</dbReference>
<dbReference type="EMBL" id="AE014297">
    <property type="protein sequence ID" value="AAX53004.1"/>
    <property type="molecule type" value="Genomic_DNA"/>
</dbReference>
<dbReference type="PIR" id="A41622">
    <property type="entry name" value="A41622"/>
</dbReference>
<dbReference type="RefSeq" id="NP_476816.1">
    <property type="nucleotide sequence ID" value="NM_057468.3"/>
</dbReference>
<dbReference type="RefSeq" id="NP_733288.1">
    <property type="nucleotide sequence ID" value="NM_170409.3"/>
</dbReference>
<dbReference type="RefSeq" id="NP_996302.1">
    <property type="nucleotide sequence ID" value="NM_206579.3"/>
</dbReference>
<dbReference type="SMR" id="P35832"/>
<dbReference type="BioGRID" id="68335">
    <property type="interactions" value="10"/>
</dbReference>
<dbReference type="STRING" id="7227.FBpp0292247"/>
<dbReference type="GlyCosmos" id="P35832">
    <property type="glycosylation" value="6 sites, No reported glycans"/>
</dbReference>
<dbReference type="GlyGen" id="P35832">
    <property type="glycosylation" value="11 sites"/>
</dbReference>
<dbReference type="PaxDb" id="7227-FBpp0292247"/>
<dbReference type="GeneID" id="43469"/>
<dbReference type="KEGG" id="dme:Dmel_CG11516"/>
<dbReference type="AGR" id="FB:FBgn0004369"/>
<dbReference type="CTD" id="43469"/>
<dbReference type="FlyBase" id="FBgn0004369">
    <property type="gene designation" value="Ptp99A"/>
</dbReference>
<dbReference type="VEuPathDB" id="VectorBase:FBgn0004369"/>
<dbReference type="InParanoid" id="P35832"/>
<dbReference type="OrthoDB" id="6022401at2759"/>
<dbReference type="PhylomeDB" id="P35832"/>
<dbReference type="BioGRID-ORCS" id="43469">
    <property type="hits" value="0 hits in 3 CRISPR screens"/>
</dbReference>
<dbReference type="ChiTaRS" id="Ptp99A">
    <property type="organism name" value="fly"/>
</dbReference>
<dbReference type="GenomeRNAi" id="43469"/>
<dbReference type="PRO" id="PR:P35832"/>
<dbReference type="Proteomes" id="UP000000803">
    <property type="component" value="Chromosome 3R"/>
</dbReference>
<dbReference type="ExpressionAtlas" id="P35832">
    <property type="expression patterns" value="baseline and differential"/>
</dbReference>
<dbReference type="GO" id="GO:0030424">
    <property type="term" value="C:axon"/>
    <property type="evidence" value="ECO:0000314"/>
    <property type="project" value="FlyBase"/>
</dbReference>
<dbReference type="GO" id="GO:0005886">
    <property type="term" value="C:plasma membrane"/>
    <property type="evidence" value="ECO:0000250"/>
    <property type="project" value="FlyBase"/>
</dbReference>
<dbReference type="GO" id="GO:0004725">
    <property type="term" value="F:protein tyrosine phosphatase activity"/>
    <property type="evidence" value="ECO:0000314"/>
    <property type="project" value="FlyBase"/>
</dbReference>
<dbReference type="GO" id="GO:0005001">
    <property type="term" value="F:transmembrane receptor protein tyrosine phosphatase activity"/>
    <property type="evidence" value="ECO:0000250"/>
    <property type="project" value="FlyBase"/>
</dbReference>
<dbReference type="GO" id="GO:0007414">
    <property type="term" value="P:axonal defasciculation"/>
    <property type="evidence" value="ECO:0000304"/>
    <property type="project" value="FlyBase"/>
</dbReference>
<dbReference type="GO" id="GO:0007415">
    <property type="term" value="P:defasciculation of motor neuron axon"/>
    <property type="evidence" value="ECO:0000316"/>
    <property type="project" value="FlyBase"/>
</dbReference>
<dbReference type="GO" id="GO:0008045">
    <property type="term" value="P:motor neuron axon guidance"/>
    <property type="evidence" value="ECO:0000316"/>
    <property type="project" value="FlyBase"/>
</dbReference>
<dbReference type="GO" id="GO:0031175">
    <property type="term" value="P:neuron projection development"/>
    <property type="evidence" value="ECO:0000318"/>
    <property type="project" value="GO_Central"/>
</dbReference>
<dbReference type="GO" id="GO:0007165">
    <property type="term" value="P:signal transduction"/>
    <property type="evidence" value="ECO:0000318"/>
    <property type="project" value="GO_Central"/>
</dbReference>
<dbReference type="CDD" id="cd00063">
    <property type="entry name" value="FN3"/>
    <property type="match status" value="2"/>
</dbReference>
<dbReference type="CDD" id="cd14550">
    <property type="entry name" value="R5-PTP-2"/>
    <property type="match status" value="1"/>
</dbReference>
<dbReference type="CDD" id="cd14549">
    <property type="entry name" value="R5-PTPc-1"/>
    <property type="match status" value="1"/>
</dbReference>
<dbReference type="FunFam" id="2.60.40.10:FF:001386">
    <property type="entry name" value="Receptor-type tyrosine-protein phosphatase gamma"/>
    <property type="match status" value="1"/>
</dbReference>
<dbReference type="FunFam" id="3.90.190.10:FF:000068">
    <property type="entry name" value="receptor-type tyrosine-protein phosphatase zeta"/>
    <property type="match status" value="1"/>
</dbReference>
<dbReference type="FunFam" id="2.60.40.10:FF:001528">
    <property type="entry name" value="Tyrosine-protein phosphatase 99A"/>
    <property type="match status" value="1"/>
</dbReference>
<dbReference type="FunFam" id="3.90.190.10:FF:000097">
    <property type="entry name" value="Tyrosine-protein phosphatase 99A"/>
    <property type="match status" value="1"/>
</dbReference>
<dbReference type="Gene3D" id="2.60.40.10">
    <property type="entry name" value="Immunoglobulins"/>
    <property type="match status" value="2"/>
</dbReference>
<dbReference type="Gene3D" id="3.90.190.10">
    <property type="entry name" value="Protein tyrosine phosphatase superfamily"/>
    <property type="match status" value="2"/>
</dbReference>
<dbReference type="InterPro" id="IPR003961">
    <property type="entry name" value="FN3_dom"/>
</dbReference>
<dbReference type="InterPro" id="IPR036116">
    <property type="entry name" value="FN3_sf"/>
</dbReference>
<dbReference type="InterPro" id="IPR013783">
    <property type="entry name" value="Ig-like_fold"/>
</dbReference>
<dbReference type="InterPro" id="IPR029021">
    <property type="entry name" value="Prot-tyrosine_phosphatase-like"/>
</dbReference>
<dbReference type="InterPro" id="IPR050348">
    <property type="entry name" value="Protein-Tyr_Phosphatase"/>
</dbReference>
<dbReference type="InterPro" id="IPR000242">
    <property type="entry name" value="PTP_cat"/>
</dbReference>
<dbReference type="InterPro" id="IPR016130">
    <property type="entry name" value="Tyr_Pase_AS"/>
</dbReference>
<dbReference type="InterPro" id="IPR003595">
    <property type="entry name" value="Tyr_Pase_cat"/>
</dbReference>
<dbReference type="InterPro" id="IPR000387">
    <property type="entry name" value="Tyr_Pase_dom"/>
</dbReference>
<dbReference type="PANTHER" id="PTHR19134">
    <property type="entry name" value="RECEPTOR-TYPE TYROSINE-PROTEIN PHOSPHATASE"/>
    <property type="match status" value="1"/>
</dbReference>
<dbReference type="PANTHER" id="PTHR19134:SF540">
    <property type="entry name" value="TYROSINE-PROTEIN PHOSPHATASE 99A"/>
    <property type="match status" value="1"/>
</dbReference>
<dbReference type="Pfam" id="PF00041">
    <property type="entry name" value="fn3"/>
    <property type="match status" value="2"/>
</dbReference>
<dbReference type="Pfam" id="PF00102">
    <property type="entry name" value="Y_phosphatase"/>
    <property type="match status" value="2"/>
</dbReference>
<dbReference type="PRINTS" id="PR00700">
    <property type="entry name" value="PRTYPHPHTASE"/>
</dbReference>
<dbReference type="SMART" id="SM00060">
    <property type="entry name" value="FN3"/>
    <property type="match status" value="2"/>
</dbReference>
<dbReference type="SMART" id="SM00194">
    <property type="entry name" value="PTPc"/>
    <property type="match status" value="2"/>
</dbReference>
<dbReference type="SMART" id="SM00404">
    <property type="entry name" value="PTPc_motif"/>
    <property type="match status" value="2"/>
</dbReference>
<dbReference type="SUPFAM" id="SSF52799">
    <property type="entry name" value="(Phosphotyrosine protein) phosphatases II"/>
    <property type="match status" value="2"/>
</dbReference>
<dbReference type="SUPFAM" id="SSF49265">
    <property type="entry name" value="Fibronectin type III"/>
    <property type="match status" value="1"/>
</dbReference>
<dbReference type="PROSITE" id="PS50853">
    <property type="entry name" value="FN3"/>
    <property type="match status" value="2"/>
</dbReference>
<dbReference type="PROSITE" id="PS00383">
    <property type="entry name" value="TYR_PHOSPHATASE_1"/>
    <property type="match status" value="1"/>
</dbReference>
<dbReference type="PROSITE" id="PS50056">
    <property type="entry name" value="TYR_PHOSPHATASE_2"/>
    <property type="match status" value="1"/>
</dbReference>
<dbReference type="PROSITE" id="PS50055">
    <property type="entry name" value="TYR_PHOSPHATASE_PTP"/>
    <property type="match status" value="2"/>
</dbReference>
<gene>
    <name type="primary">Ptp99A</name>
    <name type="ORF">CG2005</name>
</gene>
<sequence length="1301" mass="145396">MPRPQHHALLRAMLKLLLFASIAEHCATALPTNSSNSPSSPSPFTVASLPPTTASSSSSPAVISTSSFDRNLADLVNPEAETSGSGWESLETEFNLATTVDSSTQKTAKEPVLGTAATSIEQQDQPPDVPATTLAFANAFPVPVAGEMGNGNGNYNDATPPYAAVDDNYVPSKPQNLTILDVSANSITMSWHPPKNQNGAIAGYHVFHIHDNQTGVEIVKNSRNSVETLIHFELQNLRPYTDYRVIVKAFTTKNEGEPSDQIAQRTDVGGPSAPAIVNLTCHSQESITIRWRRPYEFYNTIDFYIIKTRLAGQDTHRDIRINASAKELETAMILQNLTTNSYYEVKVAAATFSVINPKKIVLGKFSESRIIQLQPNCEKLQPLLRQSHNDYNLAVLVGIIFSCFGIILIIMAFFLWSRKCFHAAYYYLDDPPHHPNAPQVDWEVPVKIGDEIRAAVPVNEFAKHVASLHADGDIGFSREYEAIQNECISDDLPCEHSQHPENKRKNRYLNITAYDHSRVHLHPTPGQKKNLDYINANFIDGYQKGHAFIGTQGPLPDTFDCFWRMIWEQRVAIIVMITNLVERGRRKCDMYWPKDGVETYGVIQVKLIEEEVMSTYTVRTLQIKHLKLKKKKQCNTEKLVYQYHYTNWPDHGTPDHPLPVLNFVKKSSAANPAEAGPIVVHCSAGVGRTGTYIVLDAMLKQIQQKNIVNVFGFLRHIRAQRNFLVQTEEQYIFLHDALVEAIASGETNLMAEQVEELKNCTPYLEQQYKNIIQFQPKDIHIASAMKQVNSIKNRGAIFPIEGSRVHLTPKPGEDGSDYINASWLHGFRRLRDFIVTQHPMAHTIKDFWQMVWDHNAQTVVLLSSLDDINFAQFWPDEATPIESDHYRVKFLNKTNKSDYVSRDFVIQSIQDDYELTVKMLHCPSWPEMSNPNSIYDFIVDVHERCNDYRNGPIVIVDRYGGAQACTFCAISSLAIEMEYCSTANVYQYAKLYHNKRPGVWTSSEDIRVIYNILSFLPGNLNLLKRTALRTEFEDVTTATPDLYSKICSNGNVPQHVILQQQQLHMLQLQQQHLETQQQQQQQQQQQQQQQQTALNETVSTPSTDTNPSLLPILSLLPPTVAPLSSSSSTTPPTPSTPTPQPPQTIQLSSHSPSDLSHQISSTVANAASPVTPATASASAGATPTTPMTPTVPPTIPTIPSLASQNSLTLTNANFHTVTNNAADLMEHQQQQMLALMQQQTQLQQQYNTHPQQHHNNVGDLLMNNADNSPTASPTITNNNHITNNNVTSAAATDAQNLDIVG</sequence>
<comment type="function">
    <text evidence="6">May play a key role in signal transduction and growth control. May have a role in the establishment of the intersegmental and segmental nerves.</text>
</comment>
<comment type="catalytic activity">
    <reaction evidence="4">
        <text>O-phospho-L-tyrosyl-[protein] + H2O = L-tyrosyl-[protein] + phosphate</text>
        <dbReference type="Rhea" id="RHEA:10684"/>
        <dbReference type="Rhea" id="RHEA-COMP:10136"/>
        <dbReference type="Rhea" id="RHEA-COMP:20101"/>
        <dbReference type="ChEBI" id="CHEBI:15377"/>
        <dbReference type="ChEBI" id="CHEBI:43474"/>
        <dbReference type="ChEBI" id="CHEBI:46858"/>
        <dbReference type="ChEBI" id="CHEBI:61978"/>
        <dbReference type="EC" id="3.1.3.48"/>
    </reaction>
</comment>
<comment type="subcellular location">
    <subcellularLocation>
        <location>Membrane</location>
        <topology>Single-pass type I membrane protein</topology>
    </subcellularLocation>
</comment>
<comment type="alternative products">
    <event type="alternative splicing"/>
    <isoform>
        <id>P35832-1</id>
        <name>B</name>
        <sequence type="displayed"/>
    </isoform>
    <isoform>
        <id>P35832-2</id>
        <name>A</name>
        <sequence type="described" ref="VSP_005142"/>
    </isoform>
    <isoform>
        <id>P35832-3</id>
        <name>C</name>
        <sequence type="described" ref="VSP_015261 VSP_005142"/>
    </isoform>
    <isoform>
        <id>P35832-4</id>
        <name>D</name>
        <sequence type="described" ref="VSP_015262 VSP_015263"/>
    </isoform>
</comment>
<comment type="tissue specificity">
    <text evidence="6 7 8">Selectively expressed in a subset of axons and pioneer neurons (including aCC and RP2) in the embryo.</text>
</comment>
<comment type="developmental stage">
    <text evidence="6">Start of expression coincides with the onset of axonogenesis.</text>
</comment>
<comment type="similarity">
    <text evidence="11">Belongs to the protein-tyrosine phosphatase family. Receptor class subfamily.</text>
</comment>
<name>PTP99_DROME</name>
<proteinExistence type="evidence at transcript level"/>
<protein>
    <recommendedName>
        <fullName>Tyrosine-protein phosphatase 99A</fullName>
        <ecNumber>3.1.3.48</ecNumber>
    </recommendedName>
    <alternativeName>
        <fullName>Receptor-linked protein-tyrosine phosphatase 99A</fullName>
        <shortName>DPTP99A</shortName>
    </alternativeName>
</protein>
<organism>
    <name type="scientific">Drosophila melanogaster</name>
    <name type="common">Fruit fly</name>
    <dbReference type="NCBI Taxonomy" id="7227"/>
    <lineage>
        <taxon>Eukaryota</taxon>
        <taxon>Metazoa</taxon>
        <taxon>Ecdysozoa</taxon>
        <taxon>Arthropoda</taxon>
        <taxon>Hexapoda</taxon>
        <taxon>Insecta</taxon>
        <taxon>Pterygota</taxon>
        <taxon>Neoptera</taxon>
        <taxon>Endopterygota</taxon>
        <taxon>Diptera</taxon>
        <taxon>Brachycera</taxon>
        <taxon>Muscomorpha</taxon>
        <taxon>Ephydroidea</taxon>
        <taxon>Drosophilidae</taxon>
        <taxon>Drosophila</taxon>
        <taxon>Sophophora</taxon>
    </lineage>
</organism>
<feature type="signal peptide" evidence="1">
    <location>
        <begin position="1"/>
        <end position="28"/>
    </location>
</feature>
<feature type="chain" id="PRO_0000025429" description="Tyrosine-protein phosphatase 99A">
    <location>
        <begin position="29"/>
        <end position="1301"/>
    </location>
</feature>
<feature type="topological domain" description="Extracellular" evidence="1">
    <location>
        <begin position="29"/>
        <end position="394"/>
    </location>
</feature>
<feature type="transmembrane region" description="Helical" evidence="1">
    <location>
        <begin position="395"/>
        <end position="415"/>
    </location>
</feature>
<feature type="topological domain" description="Cytoplasmic" evidence="1">
    <location>
        <begin position="416"/>
        <end position="1301"/>
    </location>
</feature>
<feature type="domain" description="Fibronectin type-III 1" evidence="3">
    <location>
        <begin position="66"/>
        <end position="165"/>
    </location>
</feature>
<feature type="domain" description="Fibronectin type-III 2" evidence="3">
    <location>
        <begin position="173"/>
        <end position="269"/>
    </location>
</feature>
<feature type="domain" description="Fibronectin type-III 3" evidence="3">
    <location>
        <begin position="270"/>
        <end position="376"/>
    </location>
</feature>
<feature type="domain" description="Tyrosine-protein phosphatase 1" evidence="2">
    <location>
        <begin position="476"/>
        <end position="741"/>
    </location>
</feature>
<feature type="domain" description="Tyrosine-protein phosphatase 2" evidence="2">
    <location>
        <begin position="764"/>
        <end position="1016"/>
    </location>
</feature>
<feature type="region of interest" description="Disordered" evidence="5">
    <location>
        <begin position="31"/>
        <end position="63"/>
    </location>
</feature>
<feature type="region of interest" description="Disordered" evidence="5">
    <location>
        <begin position="1092"/>
        <end position="1199"/>
    </location>
</feature>
<feature type="region of interest" description="Disordered" evidence="5">
    <location>
        <begin position="1257"/>
        <end position="1281"/>
    </location>
</feature>
<feature type="compositionally biased region" description="Low complexity" evidence="5">
    <location>
        <begin position="33"/>
        <end position="63"/>
    </location>
</feature>
<feature type="compositionally biased region" description="Polar residues" evidence="5">
    <location>
        <begin position="1092"/>
        <end position="1106"/>
    </location>
</feature>
<feature type="compositionally biased region" description="Low complexity" evidence="5">
    <location>
        <begin position="1107"/>
        <end position="1130"/>
    </location>
</feature>
<feature type="compositionally biased region" description="Pro residues" evidence="5">
    <location>
        <begin position="1131"/>
        <end position="1142"/>
    </location>
</feature>
<feature type="compositionally biased region" description="Polar residues" evidence="5">
    <location>
        <begin position="1150"/>
        <end position="1161"/>
    </location>
</feature>
<feature type="compositionally biased region" description="Low complexity" evidence="5">
    <location>
        <begin position="1162"/>
        <end position="1188"/>
    </location>
</feature>
<feature type="compositionally biased region" description="Polar residues" evidence="5">
    <location>
        <begin position="1264"/>
        <end position="1273"/>
    </location>
</feature>
<feature type="active site" description="Phosphocysteine intermediate" evidence="2 4">
    <location>
        <position position="682"/>
    </location>
</feature>
<feature type="glycosylation site" description="N-linked (GlcNAc...) asparagine" evidence="1">
    <location>
        <position position="33"/>
    </location>
</feature>
<feature type="glycosylation site" description="N-linked (GlcNAc...) asparagine" evidence="1">
    <location>
        <position position="176"/>
    </location>
</feature>
<feature type="glycosylation site" description="N-linked (GlcNAc...) asparagine" evidence="1">
    <location>
        <position position="212"/>
    </location>
</feature>
<feature type="glycosylation site" description="N-linked (GlcNAc...) asparagine" evidence="1">
    <location>
        <position position="278"/>
    </location>
</feature>
<feature type="glycosylation site" description="N-linked (GlcNAc...) asparagine" evidence="1">
    <location>
        <position position="322"/>
    </location>
</feature>
<feature type="glycosylation site" description="N-linked (GlcNAc...) asparagine" evidence="1">
    <location>
        <position position="336"/>
    </location>
</feature>
<feature type="splice variant" id="VSP_015261" description="In isoform C." evidence="11">
    <original>R</original>
    <variation>REFNYVFIWGLFGVKG</variation>
    <location>
        <position position="238"/>
    </location>
</feature>
<feature type="splice variant" id="VSP_005142" description="In isoform A and isoform C." evidence="9 10">
    <location>
        <begin position="1050"/>
        <end position="1119"/>
    </location>
</feature>
<feature type="splice variant" id="VSP_015262" description="In isoform D." evidence="11">
    <original>GNVPQHVIL</original>
    <variation>AQQRQMLKT</variation>
    <location>
        <begin position="1050"/>
        <end position="1058"/>
    </location>
</feature>
<feature type="splice variant" id="VSP_015263" description="In isoform D." evidence="11">
    <location>
        <begin position="1059"/>
        <end position="1301"/>
    </location>
</feature>
<feature type="sequence conflict" description="In Ref. 4; AAF56891/AAN14172/AAS65222/AAX53004." evidence="11" ref="4">
    <original>V</original>
    <variation>A</variation>
    <location>
        <position position="46"/>
    </location>
</feature>
<feature type="sequence conflict" description="In Ref. 4; AAF56891/AAN14172/AAS65222/AAX53004." evidence="11" ref="4">
    <original>F</original>
    <variation>S</variation>
    <location>
        <position position="68"/>
    </location>
</feature>
<feature type="sequence conflict" description="In Ref. 4; AAF56891/AAN14172/AAS65222/AAX53004." evidence="11" ref="4">
    <original>S</original>
    <variation>T</variation>
    <location>
        <position position="83"/>
    </location>
</feature>
<feature type="sequence conflict" description="In Ref. 4; AAF56891/AAN14172/AAS65222/AAX53004." evidence="11" ref="4">
    <original>A</original>
    <variation>E</variation>
    <location>
        <position position="108"/>
    </location>
</feature>
<feature type="sequence conflict" description="In Ref. 4; AAF56891/AAN14172/AAS65222/AAX53004." evidence="11" ref="4">
    <original>A</original>
    <variation>V</variation>
    <location>
        <position position="116"/>
    </location>
</feature>
<feature type="sequence conflict" description="In Ref. 3; AAA28483." evidence="11" ref="3">
    <original>R</original>
    <variation>P</variation>
    <location>
        <position position="586"/>
    </location>
</feature>
<feature type="sequence conflict" description="In Ref. 4; AAF56891/AAN14172/AAS65222." evidence="11" ref="4">
    <original>T</original>
    <variation>P</variation>
    <location>
        <position position="1133"/>
    </location>
</feature>
<feature type="sequence conflict" description="In Ref. 4; AAF56891/AAN14172/AAS65222." evidence="11" ref="4">
    <original>ASPVTPATAS</original>
    <variation>GSPAT</variation>
    <location>
        <begin position="1167"/>
        <end position="1176"/>
    </location>
</feature>
<feature type="sequence conflict" description="In Ref. 1 and 3." evidence="11" ref="1 3">
    <original>N</original>
    <variation>H</variation>
    <location>
        <position position="1205"/>
    </location>
</feature>
<keyword id="KW-0025">Alternative splicing</keyword>
<keyword id="KW-0325">Glycoprotein</keyword>
<keyword id="KW-0378">Hydrolase</keyword>
<keyword id="KW-0472">Membrane</keyword>
<keyword id="KW-0904">Protein phosphatase</keyword>
<keyword id="KW-1185">Reference proteome</keyword>
<keyword id="KW-0677">Repeat</keyword>
<keyword id="KW-0732">Signal</keyword>
<keyword id="KW-0812">Transmembrane</keyword>
<keyword id="KW-1133">Transmembrane helix</keyword>
<accession>P35832</accession>
<accession>Q59DT5</accession>
<accession>Q7KRW3</accession>
<accession>Q8IMK9</accession>
<accession>Q9VAL3</accession>
<reference key="1">
    <citation type="journal article" date="1991" name="Cell">
        <title>Two Drosophila receptor-like tyrosine phosphatase genes are expressed in a subset of developing axons and pioneer neurons in the embryonic CNS.</title>
        <authorList>
            <person name="Yang X."/>
            <person name="Seow K.T."/>
            <person name="Bahri S.M."/>
            <person name="Oon S.H."/>
            <person name="Chia W."/>
        </authorList>
    </citation>
    <scope>NUCLEOTIDE SEQUENCE [MRNA] (ISOFORMS A AND B)</scope>
    <scope>FUNCTION</scope>
    <scope>TISSUE SPECIFICITY</scope>
    <scope>DEVELOPMENTAL STAGE</scope>
    <source>
        <tissue>Embryo</tissue>
    </source>
</reference>
<reference key="2">
    <citation type="journal article" date="1991" name="Cell">
        <title>Three receptor-linked protein-tyrosine phosphatases are selectively expressed on central nervous system axons in the Drosophila embryo.</title>
        <authorList>
            <person name="Tian S.-S."/>
            <person name="Tsoulfas P."/>
            <person name="Zinn K."/>
        </authorList>
    </citation>
    <scope>NUCLEOTIDE SEQUENCE [MRNA] (ISOFORM A)</scope>
    <scope>TISSUE SPECIFICITY</scope>
    <source>
        <tissue>Embryo</tissue>
    </source>
</reference>
<reference key="3">
    <citation type="journal article" date="1991" name="Proc. Natl. Acad. Sci. U.S.A.">
        <title>Cloning and characterization of a receptor-class phosphotyrosine phosphatase gene expressed on central nervous system axons in Drosophila melanogaster.</title>
        <authorList>
            <person name="Hariharan I.K."/>
            <person name="Chuang P.-T."/>
            <person name="Rubin G.M."/>
        </authorList>
    </citation>
    <scope>NUCLEOTIDE SEQUENCE [MRNA] (ISOFORM B)</scope>
    <scope>TISSUE SPECIFICITY</scope>
    <source>
        <tissue>Eye imaginal disk</tissue>
    </source>
</reference>
<reference key="4">
    <citation type="journal article" date="2000" name="Science">
        <title>The genome sequence of Drosophila melanogaster.</title>
        <authorList>
            <person name="Adams M.D."/>
            <person name="Celniker S.E."/>
            <person name="Holt R.A."/>
            <person name="Evans C.A."/>
            <person name="Gocayne J.D."/>
            <person name="Amanatides P.G."/>
            <person name="Scherer S.E."/>
            <person name="Li P.W."/>
            <person name="Hoskins R.A."/>
            <person name="Galle R.F."/>
            <person name="George R.A."/>
            <person name="Lewis S.E."/>
            <person name="Richards S."/>
            <person name="Ashburner M."/>
            <person name="Henderson S.N."/>
            <person name="Sutton G.G."/>
            <person name="Wortman J.R."/>
            <person name="Yandell M.D."/>
            <person name="Zhang Q."/>
            <person name="Chen L.X."/>
            <person name="Brandon R.C."/>
            <person name="Rogers Y.-H.C."/>
            <person name="Blazej R.G."/>
            <person name="Champe M."/>
            <person name="Pfeiffer B.D."/>
            <person name="Wan K.H."/>
            <person name="Doyle C."/>
            <person name="Baxter E.G."/>
            <person name="Helt G."/>
            <person name="Nelson C.R."/>
            <person name="Miklos G.L.G."/>
            <person name="Abril J.F."/>
            <person name="Agbayani A."/>
            <person name="An H.-J."/>
            <person name="Andrews-Pfannkoch C."/>
            <person name="Baldwin D."/>
            <person name="Ballew R.M."/>
            <person name="Basu A."/>
            <person name="Baxendale J."/>
            <person name="Bayraktaroglu L."/>
            <person name="Beasley E.M."/>
            <person name="Beeson K.Y."/>
            <person name="Benos P.V."/>
            <person name="Berman B.P."/>
            <person name="Bhandari D."/>
            <person name="Bolshakov S."/>
            <person name="Borkova D."/>
            <person name="Botchan M.R."/>
            <person name="Bouck J."/>
            <person name="Brokstein P."/>
            <person name="Brottier P."/>
            <person name="Burtis K.C."/>
            <person name="Busam D.A."/>
            <person name="Butler H."/>
            <person name="Cadieu E."/>
            <person name="Center A."/>
            <person name="Chandra I."/>
            <person name="Cherry J.M."/>
            <person name="Cawley S."/>
            <person name="Dahlke C."/>
            <person name="Davenport L.B."/>
            <person name="Davies P."/>
            <person name="de Pablos B."/>
            <person name="Delcher A."/>
            <person name="Deng Z."/>
            <person name="Mays A.D."/>
            <person name="Dew I."/>
            <person name="Dietz S.M."/>
            <person name="Dodson K."/>
            <person name="Doup L.E."/>
            <person name="Downes M."/>
            <person name="Dugan-Rocha S."/>
            <person name="Dunkov B.C."/>
            <person name="Dunn P."/>
            <person name="Durbin K.J."/>
            <person name="Evangelista C.C."/>
            <person name="Ferraz C."/>
            <person name="Ferriera S."/>
            <person name="Fleischmann W."/>
            <person name="Fosler C."/>
            <person name="Gabrielian A.E."/>
            <person name="Garg N.S."/>
            <person name="Gelbart W.M."/>
            <person name="Glasser K."/>
            <person name="Glodek A."/>
            <person name="Gong F."/>
            <person name="Gorrell J.H."/>
            <person name="Gu Z."/>
            <person name="Guan P."/>
            <person name="Harris M."/>
            <person name="Harris N.L."/>
            <person name="Harvey D.A."/>
            <person name="Heiman T.J."/>
            <person name="Hernandez J.R."/>
            <person name="Houck J."/>
            <person name="Hostin D."/>
            <person name="Houston K.A."/>
            <person name="Howland T.J."/>
            <person name="Wei M.-H."/>
            <person name="Ibegwam C."/>
            <person name="Jalali M."/>
            <person name="Kalush F."/>
            <person name="Karpen G.H."/>
            <person name="Ke Z."/>
            <person name="Kennison J.A."/>
            <person name="Ketchum K.A."/>
            <person name="Kimmel B.E."/>
            <person name="Kodira C.D."/>
            <person name="Kraft C.L."/>
            <person name="Kravitz S."/>
            <person name="Kulp D."/>
            <person name="Lai Z."/>
            <person name="Lasko P."/>
            <person name="Lei Y."/>
            <person name="Levitsky A.A."/>
            <person name="Li J.H."/>
            <person name="Li Z."/>
            <person name="Liang Y."/>
            <person name="Lin X."/>
            <person name="Liu X."/>
            <person name="Mattei B."/>
            <person name="McIntosh T.C."/>
            <person name="McLeod M.P."/>
            <person name="McPherson D."/>
            <person name="Merkulov G."/>
            <person name="Milshina N.V."/>
            <person name="Mobarry C."/>
            <person name="Morris J."/>
            <person name="Moshrefi A."/>
            <person name="Mount S.M."/>
            <person name="Moy M."/>
            <person name="Murphy B."/>
            <person name="Murphy L."/>
            <person name="Muzny D.M."/>
            <person name="Nelson D.L."/>
            <person name="Nelson D.R."/>
            <person name="Nelson K.A."/>
            <person name="Nixon K."/>
            <person name="Nusskern D.R."/>
            <person name="Pacleb J.M."/>
            <person name="Palazzolo M."/>
            <person name="Pittman G.S."/>
            <person name="Pan S."/>
            <person name="Pollard J."/>
            <person name="Puri V."/>
            <person name="Reese M.G."/>
            <person name="Reinert K."/>
            <person name="Remington K."/>
            <person name="Saunders R.D.C."/>
            <person name="Scheeler F."/>
            <person name="Shen H."/>
            <person name="Shue B.C."/>
            <person name="Siden-Kiamos I."/>
            <person name="Simpson M."/>
            <person name="Skupski M.P."/>
            <person name="Smith T.J."/>
            <person name="Spier E."/>
            <person name="Spradling A.C."/>
            <person name="Stapleton M."/>
            <person name="Strong R."/>
            <person name="Sun E."/>
            <person name="Svirskas R."/>
            <person name="Tector C."/>
            <person name="Turner R."/>
            <person name="Venter E."/>
            <person name="Wang A.H."/>
            <person name="Wang X."/>
            <person name="Wang Z.-Y."/>
            <person name="Wassarman D.A."/>
            <person name="Weinstock G.M."/>
            <person name="Weissenbach J."/>
            <person name="Williams S.M."/>
            <person name="Woodage T."/>
            <person name="Worley K.C."/>
            <person name="Wu D."/>
            <person name="Yang S."/>
            <person name="Yao Q.A."/>
            <person name="Ye J."/>
            <person name="Yeh R.-F."/>
            <person name="Zaveri J.S."/>
            <person name="Zhan M."/>
            <person name="Zhang G."/>
            <person name="Zhao Q."/>
            <person name="Zheng L."/>
            <person name="Zheng X.H."/>
            <person name="Zhong F.N."/>
            <person name="Zhong W."/>
            <person name="Zhou X."/>
            <person name="Zhu S.C."/>
            <person name="Zhu X."/>
            <person name="Smith H.O."/>
            <person name="Gibbs R.A."/>
            <person name="Myers E.W."/>
            <person name="Rubin G.M."/>
            <person name="Venter J.C."/>
        </authorList>
    </citation>
    <scope>NUCLEOTIDE SEQUENCE [LARGE SCALE GENOMIC DNA]</scope>
    <source>
        <strain>Berkeley</strain>
    </source>
</reference>
<reference key="5">
    <citation type="journal article" date="2002" name="Genome Biol.">
        <title>Annotation of the Drosophila melanogaster euchromatic genome: a systematic review.</title>
        <authorList>
            <person name="Misra S."/>
            <person name="Crosby M.A."/>
            <person name="Mungall C.J."/>
            <person name="Matthews B.B."/>
            <person name="Campbell K.S."/>
            <person name="Hradecky P."/>
            <person name="Huang Y."/>
            <person name="Kaminker J.S."/>
            <person name="Millburn G.H."/>
            <person name="Prochnik S.E."/>
            <person name="Smith C.D."/>
            <person name="Tupy J.L."/>
            <person name="Whitfield E.J."/>
            <person name="Bayraktaroglu L."/>
            <person name="Berman B.P."/>
            <person name="Bettencourt B.R."/>
            <person name="Celniker S.E."/>
            <person name="de Grey A.D.N.J."/>
            <person name="Drysdale R.A."/>
            <person name="Harris N.L."/>
            <person name="Richter J."/>
            <person name="Russo S."/>
            <person name="Schroeder A.J."/>
            <person name="Shu S.Q."/>
            <person name="Stapleton M."/>
            <person name="Yamada C."/>
            <person name="Ashburner M."/>
            <person name="Gelbart W.M."/>
            <person name="Rubin G.M."/>
            <person name="Lewis S.E."/>
        </authorList>
    </citation>
    <scope>GENOME REANNOTATION</scope>
    <scope>ALTERNATIVE SPLICING</scope>
    <source>
        <strain>Berkeley</strain>
    </source>
</reference>
<evidence type="ECO:0000255" key="1"/>
<evidence type="ECO:0000255" key="2">
    <source>
        <dbReference type="PROSITE-ProRule" id="PRU00160"/>
    </source>
</evidence>
<evidence type="ECO:0000255" key="3">
    <source>
        <dbReference type="PROSITE-ProRule" id="PRU00316"/>
    </source>
</evidence>
<evidence type="ECO:0000255" key="4">
    <source>
        <dbReference type="PROSITE-ProRule" id="PRU10044"/>
    </source>
</evidence>
<evidence type="ECO:0000256" key="5">
    <source>
        <dbReference type="SAM" id="MobiDB-lite"/>
    </source>
</evidence>
<evidence type="ECO:0000269" key="6">
    <source>
    </source>
</evidence>
<evidence type="ECO:0000269" key="7">
    <source>
    </source>
</evidence>
<evidence type="ECO:0000269" key="8">
    <source>
    </source>
</evidence>
<evidence type="ECO:0000303" key="9">
    <source>
    </source>
</evidence>
<evidence type="ECO:0000303" key="10">
    <source>
    </source>
</evidence>
<evidence type="ECO:0000305" key="11"/>